<name>HTPX_MYCVP</name>
<keyword id="KW-1003">Cell membrane</keyword>
<keyword id="KW-0378">Hydrolase</keyword>
<keyword id="KW-0472">Membrane</keyword>
<keyword id="KW-0479">Metal-binding</keyword>
<keyword id="KW-0482">Metalloprotease</keyword>
<keyword id="KW-0645">Protease</keyword>
<keyword id="KW-0812">Transmembrane</keyword>
<keyword id="KW-1133">Transmembrane helix</keyword>
<keyword id="KW-0862">Zinc</keyword>
<organism>
    <name type="scientific">Mycolicibacterium vanbaalenii (strain DSM 7251 / JCM 13017 / BCRC 16820 / KCTC 9966 / NRRL B-24157 / PYR-1)</name>
    <name type="common">Mycobacterium vanbaalenii</name>
    <dbReference type="NCBI Taxonomy" id="350058"/>
    <lineage>
        <taxon>Bacteria</taxon>
        <taxon>Bacillati</taxon>
        <taxon>Actinomycetota</taxon>
        <taxon>Actinomycetes</taxon>
        <taxon>Mycobacteriales</taxon>
        <taxon>Mycobacteriaceae</taxon>
        <taxon>Mycolicibacterium</taxon>
    </lineage>
</organism>
<feature type="chain" id="PRO_1000020895" description="Protease HtpX homolog">
    <location>
        <begin position="1"/>
        <end position="296"/>
    </location>
</feature>
<feature type="transmembrane region" description="Helical" evidence="1">
    <location>
        <begin position="10"/>
        <end position="30"/>
    </location>
</feature>
<feature type="transmembrane region" description="Helical" evidence="1">
    <location>
        <begin position="33"/>
        <end position="53"/>
    </location>
</feature>
<feature type="transmembrane region" description="Helical" evidence="1">
    <location>
        <begin position="145"/>
        <end position="165"/>
    </location>
</feature>
<feature type="transmembrane region" description="Helical" evidence="1">
    <location>
        <begin position="182"/>
        <end position="202"/>
    </location>
</feature>
<feature type="active site" evidence="1">
    <location>
        <position position="136"/>
    </location>
</feature>
<feature type="binding site" evidence="1">
    <location>
        <position position="135"/>
    </location>
    <ligand>
        <name>Zn(2+)</name>
        <dbReference type="ChEBI" id="CHEBI:29105"/>
        <note>catalytic</note>
    </ligand>
</feature>
<feature type="binding site" evidence="1">
    <location>
        <position position="139"/>
    </location>
    <ligand>
        <name>Zn(2+)</name>
        <dbReference type="ChEBI" id="CHEBI:29105"/>
        <note>catalytic</note>
    </ligand>
</feature>
<feature type="binding site" evidence="1">
    <location>
        <position position="207"/>
    </location>
    <ligand>
        <name>Zn(2+)</name>
        <dbReference type="ChEBI" id="CHEBI:29105"/>
        <note>catalytic</note>
    </ligand>
</feature>
<reference key="1">
    <citation type="submission" date="2006-12" db="EMBL/GenBank/DDBJ databases">
        <title>Complete sequence of Mycobacterium vanbaalenii PYR-1.</title>
        <authorList>
            <consortium name="US DOE Joint Genome Institute"/>
            <person name="Copeland A."/>
            <person name="Lucas S."/>
            <person name="Lapidus A."/>
            <person name="Barry K."/>
            <person name="Detter J.C."/>
            <person name="Glavina del Rio T."/>
            <person name="Hammon N."/>
            <person name="Israni S."/>
            <person name="Dalin E."/>
            <person name="Tice H."/>
            <person name="Pitluck S."/>
            <person name="Singan V."/>
            <person name="Schmutz J."/>
            <person name="Larimer F."/>
            <person name="Land M."/>
            <person name="Hauser L."/>
            <person name="Kyrpides N."/>
            <person name="Anderson I.J."/>
            <person name="Miller C."/>
            <person name="Richardson P."/>
        </authorList>
    </citation>
    <scope>NUCLEOTIDE SEQUENCE [LARGE SCALE GENOMIC DNA]</scope>
    <source>
        <strain>DSM 7251 / JCM 13017 / BCRC 16820 / KCTC 9966 / NRRL B-24157 / PYR-1</strain>
    </source>
</reference>
<proteinExistence type="inferred from homology"/>
<dbReference type="EC" id="3.4.24.-" evidence="1"/>
<dbReference type="EMBL" id="CP000511">
    <property type="protein sequence ID" value="ABM11831.1"/>
    <property type="molecule type" value="Genomic_DNA"/>
</dbReference>
<dbReference type="RefSeq" id="WP_011778266.1">
    <property type="nucleotide sequence ID" value="NZ_JACKSD010000129.1"/>
</dbReference>
<dbReference type="STRING" id="350058.Mvan_0993"/>
<dbReference type="KEGG" id="mva:Mvan_0993"/>
<dbReference type="eggNOG" id="COG0501">
    <property type="taxonomic scope" value="Bacteria"/>
</dbReference>
<dbReference type="HOGENOM" id="CLU_042266_3_0_11"/>
<dbReference type="Proteomes" id="UP000009159">
    <property type="component" value="Chromosome"/>
</dbReference>
<dbReference type="GO" id="GO:0005886">
    <property type="term" value="C:plasma membrane"/>
    <property type="evidence" value="ECO:0007669"/>
    <property type="project" value="UniProtKB-SubCell"/>
</dbReference>
<dbReference type="GO" id="GO:0004222">
    <property type="term" value="F:metalloendopeptidase activity"/>
    <property type="evidence" value="ECO:0007669"/>
    <property type="project" value="UniProtKB-UniRule"/>
</dbReference>
<dbReference type="GO" id="GO:0008270">
    <property type="term" value="F:zinc ion binding"/>
    <property type="evidence" value="ECO:0007669"/>
    <property type="project" value="UniProtKB-UniRule"/>
</dbReference>
<dbReference type="GO" id="GO:0006508">
    <property type="term" value="P:proteolysis"/>
    <property type="evidence" value="ECO:0007669"/>
    <property type="project" value="UniProtKB-KW"/>
</dbReference>
<dbReference type="CDD" id="cd07336">
    <property type="entry name" value="M48B_HtpX_like"/>
    <property type="match status" value="1"/>
</dbReference>
<dbReference type="FunFam" id="3.30.2010.10:FF:000008">
    <property type="entry name" value="Protease HtpX homolog"/>
    <property type="match status" value="1"/>
</dbReference>
<dbReference type="Gene3D" id="3.30.2010.10">
    <property type="entry name" value="Metalloproteases ('zincins'), catalytic domain"/>
    <property type="match status" value="1"/>
</dbReference>
<dbReference type="HAMAP" id="MF_00188">
    <property type="entry name" value="Pept_M48_protease_HtpX"/>
    <property type="match status" value="1"/>
</dbReference>
<dbReference type="InterPro" id="IPR050083">
    <property type="entry name" value="HtpX_protease"/>
</dbReference>
<dbReference type="InterPro" id="IPR022919">
    <property type="entry name" value="Pept_M48_protease_HtpX"/>
</dbReference>
<dbReference type="InterPro" id="IPR001915">
    <property type="entry name" value="Peptidase_M48"/>
</dbReference>
<dbReference type="NCBIfam" id="NF002839">
    <property type="entry name" value="PRK03072.1"/>
    <property type="match status" value="1"/>
</dbReference>
<dbReference type="PANTHER" id="PTHR43221">
    <property type="entry name" value="PROTEASE HTPX"/>
    <property type="match status" value="1"/>
</dbReference>
<dbReference type="PANTHER" id="PTHR43221:SF1">
    <property type="entry name" value="PROTEASE HTPX"/>
    <property type="match status" value="1"/>
</dbReference>
<dbReference type="Pfam" id="PF01435">
    <property type="entry name" value="Peptidase_M48"/>
    <property type="match status" value="1"/>
</dbReference>
<dbReference type="PROSITE" id="PS00142">
    <property type="entry name" value="ZINC_PROTEASE"/>
    <property type="match status" value="1"/>
</dbReference>
<gene>
    <name evidence="1" type="primary">htpX</name>
    <name type="ordered locus">Mvan_0993</name>
</gene>
<evidence type="ECO:0000255" key="1">
    <source>
        <dbReference type="HAMAP-Rule" id="MF_00188"/>
    </source>
</evidence>
<protein>
    <recommendedName>
        <fullName evidence="1">Protease HtpX homolog</fullName>
        <ecNumber evidence="1">3.4.24.-</ecNumber>
    </recommendedName>
</protein>
<sequence>MTWHPHANRAKTFLLLVLFSGLIVGVGALFGRNIMFLAVLFAIGMNAYVYFNSDKLALRAMHAQPVNEMQAPVMYKIVRELATTARQPMPRLYISDTAAPNAFATGRNPRNAAVCCTTGILQMLNERELRAVLGHELSHVYNRDILISCVAGAMASVITALANLAFFASMFGGNRDGGTNPLAILLVSLLGPIAATVIRLAVSRSREYQADQSGAELTGDPLALASALRKISAGVERAPLPPEPQLADQAHLMIANPFRSGEKIGKLFATHPPIADRIARLEAMAGPDTYRHPGLY</sequence>
<accession>A1T3T1</accession>
<comment type="cofactor">
    <cofactor evidence="1">
        <name>Zn(2+)</name>
        <dbReference type="ChEBI" id="CHEBI:29105"/>
    </cofactor>
    <text evidence="1">Binds 1 zinc ion per subunit.</text>
</comment>
<comment type="subcellular location">
    <subcellularLocation>
        <location evidence="1">Cell membrane</location>
        <topology evidence="1">Multi-pass membrane protein</topology>
    </subcellularLocation>
</comment>
<comment type="similarity">
    <text evidence="1">Belongs to the peptidase M48B family.</text>
</comment>